<name>DPP3_DROME</name>
<accession>Q9VHR8</accession>
<accession>Q8IHE9</accession>
<accession>Q961F1</accession>
<sequence length="786" mass="89194">MFWLRGLQRSRQQLNRLCHFRSRLNYGTSPSIRSVQPSISRSLGFCSSLVRYSCSTNLPQPAEMASKTAHFVLPNTQPIADLDCKSAFENLTEKEKLYAHHFSQASWDGGLIALIQSSPEAPLIFSLLHRIFLAEKIPVLRAKALEAGVSADDFTAFLVYACGVFANAGNYKGMGDSKIVPNLSEKQFETIVKASAAYSDEPRVGKIFEKVKNLIYALESRNEILGFAPDGITTYWSDNCTKEDSEIVNAWLTSKRIEPYMCRTFKIVENGQTVYDVKLGSVAESTQDGITLPLEEYNGNKFRVTRGDYQKLLQRVNQHLLQAQKYAANENESKMIEHYVRSFEQGSLDEHKNGSRWWIKDKGPVIETYIGFIETYRDPAGGRAEFEGFVAMVNKESSAKFSELVNRAEKLIEYLPWTEPYEKDSYLKPDFTSLDVLTFAGSGVPAGINIPNYDEIRQDEGFKNVSLGNVLANINRKDPIPFLTEEDQTLMKEYKVKAFEVQVGLHELLGHGSGKLFRIDENGVYNFDKENTKNLVTGEPITKWYLPGETYDTKFGAIGSSYEECRAEAVGLYLSLQRDILEIFGFKDKAEQDNIIYVNWLSLIWNGMGVALEMFNPKSKLWLQAHSRARFVIMKVLLEAGEGLVKVEETEKGKNLLLTVDRSKIDTVGRKALGDFLTKLQVYKSTADIEAASKMYEHYSKVDESGSHPWAKWRDICLAHKKPRMILVQANTAIGQDQKVQLKTYEPTHEGYIQSWVERYPNTDIDDLLESIVEKDKKYFPTAFNN</sequence>
<evidence type="ECO:0000250" key="1">
    <source>
        <dbReference type="UniProtKB" id="O55096"/>
    </source>
</evidence>
<evidence type="ECO:0000250" key="2">
    <source>
        <dbReference type="UniProtKB" id="Q9NY33"/>
    </source>
</evidence>
<evidence type="ECO:0000255" key="3"/>
<evidence type="ECO:0000269" key="4">
    <source>
    </source>
</evidence>
<evidence type="ECO:0000303" key="5">
    <source>
    </source>
</evidence>
<evidence type="ECO:0000305" key="6"/>
<keyword id="KW-0025">Alternative splicing</keyword>
<keyword id="KW-0031">Aminopeptidase</keyword>
<keyword id="KW-1003">Cell membrane</keyword>
<keyword id="KW-0963">Cytoplasm</keyword>
<keyword id="KW-0378">Hydrolase</keyword>
<keyword id="KW-0472">Membrane</keyword>
<keyword id="KW-0479">Metal-binding</keyword>
<keyword id="KW-0482">Metalloprotease</keyword>
<keyword id="KW-0645">Protease</keyword>
<keyword id="KW-1185">Reference proteome</keyword>
<keyword id="KW-0812">Transmembrane</keyword>
<keyword id="KW-1133">Transmembrane helix</keyword>
<keyword id="KW-0862">Zinc</keyword>
<organism>
    <name type="scientific">Drosophila melanogaster</name>
    <name type="common">Fruit fly</name>
    <dbReference type="NCBI Taxonomy" id="7227"/>
    <lineage>
        <taxon>Eukaryota</taxon>
        <taxon>Metazoa</taxon>
        <taxon>Ecdysozoa</taxon>
        <taxon>Arthropoda</taxon>
        <taxon>Hexapoda</taxon>
        <taxon>Insecta</taxon>
        <taxon>Pterygota</taxon>
        <taxon>Neoptera</taxon>
        <taxon>Endopterygota</taxon>
        <taxon>Diptera</taxon>
        <taxon>Brachycera</taxon>
        <taxon>Muscomorpha</taxon>
        <taxon>Ephydroidea</taxon>
        <taxon>Drosophilidae</taxon>
        <taxon>Drosophila</taxon>
        <taxon>Sophophora</taxon>
    </lineage>
</organism>
<dbReference type="EC" id="3.4.14.4"/>
<dbReference type="EMBL" id="AE014297">
    <property type="protein sequence ID" value="AAF54232.1"/>
    <property type="molecule type" value="Genomic_DNA"/>
</dbReference>
<dbReference type="EMBL" id="AE014297">
    <property type="protein sequence ID" value="AAN14313.1"/>
    <property type="molecule type" value="Genomic_DNA"/>
</dbReference>
<dbReference type="EMBL" id="AY051625">
    <property type="protein sequence ID" value="AAK93049.1"/>
    <property type="status" value="ALT_INIT"/>
    <property type="molecule type" value="mRNA"/>
</dbReference>
<dbReference type="EMBL" id="BT001283">
    <property type="protein sequence ID" value="AAN71039.1"/>
    <property type="molecule type" value="mRNA"/>
</dbReference>
<dbReference type="EMBL" id="BT001401">
    <property type="protein sequence ID" value="AAN71156.1"/>
    <property type="molecule type" value="mRNA"/>
</dbReference>
<dbReference type="EMBL" id="BT001402">
    <property type="protein sequence ID" value="AAN71157.1"/>
    <property type="molecule type" value="mRNA"/>
</dbReference>
<dbReference type="EMBL" id="BT001639">
    <property type="protein sequence ID" value="AAN71394.1"/>
    <property type="molecule type" value="mRNA"/>
</dbReference>
<dbReference type="RefSeq" id="NP_731237.1">
    <molecule id="Q9VHR8-1"/>
    <property type="nucleotide sequence ID" value="NM_169217.3"/>
</dbReference>
<dbReference type="RefSeq" id="NP_731238.1">
    <molecule id="Q9VHR8-2"/>
    <property type="nucleotide sequence ID" value="NM_169218.3"/>
</dbReference>
<dbReference type="SMR" id="Q9VHR8"/>
<dbReference type="BioGRID" id="66177">
    <property type="interactions" value="3"/>
</dbReference>
<dbReference type="FunCoup" id="Q9VHR8">
    <property type="interactions" value="1418"/>
</dbReference>
<dbReference type="IntAct" id="Q9VHR8">
    <property type="interactions" value="107"/>
</dbReference>
<dbReference type="STRING" id="7227.FBpp0081331"/>
<dbReference type="MEROPS" id="M49.A01"/>
<dbReference type="PaxDb" id="7227-FBpp0081331"/>
<dbReference type="DNASU" id="40996"/>
<dbReference type="EnsemblMetazoa" id="FBtr0081840">
    <molecule id="Q9VHR8-2"/>
    <property type="protein sequence ID" value="FBpp0081330"/>
    <property type="gene ID" value="FBgn0037580"/>
</dbReference>
<dbReference type="EnsemblMetazoa" id="FBtr0081841">
    <molecule id="Q9VHR8-1"/>
    <property type="protein sequence ID" value="FBpp0081331"/>
    <property type="gene ID" value="FBgn0037580"/>
</dbReference>
<dbReference type="GeneID" id="40996"/>
<dbReference type="KEGG" id="dme:Dmel_CG7415"/>
<dbReference type="AGR" id="FB:FBgn0037580"/>
<dbReference type="CTD" id="40996"/>
<dbReference type="FlyBase" id="FBgn0037580">
    <property type="gene designation" value="DppIII"/>
</dbReference>
<dbReference type="VEuPathDB" id="VectorBase:FBgn0037580"/>
<dbReference type="eggNOG" id="KOG3675">
    <property type="taxonomic scope" value="Eukaryota"/>
</dbReference>
<dbReference type="GeneTree" id="ENSGT00390000007335"/>
<dbReference type="InParanoid" id="Q9VHR8"/>
<dbReference type="OMA" id="QRYWIRD"/>
<dbReference type="OrthoDB" id="4694525at2759"/>
<dbReference type="PhylomeDB" id="Q9VHR8"/>
<dbReference type="BRENDA" id="3.4.14.4">
    <property type="organism ID" value="1994"/>
</dbReference>
<dbReference type="BioGRID-ORCS" id="40996">
    <property type="hits" value="0 hits in 1 CRISPR screen"/>
</dbReference>
<dbReference type="GenomeRNAi" id="40996"/>
<dbReference type="PRO" id="PR:Q9VHR8"/>
<dbReference type="Proteomes" id="UP000000803">
    <property type="component" value="Chromosome 3R"/>
</dbReference>
<dbReference type="Bgee" id="FBgn0037580">
    <property type="expression patterns" value="Expressed in early-mid elongation-stage spermatid (Drosophila) in testis and 137 other cell types or tissues"/>
</dbReference>
<dbReference type="ExpressionAtlas" id="Q9VHR8">
    <property type="expression patterns" value="baseline and differential"/>
</dbReference>
<dbReference type="GO" id="GO:0005737">
    <property type="term" value="C:cytoplasm"/>
    <property type="evidence" value="ECO:0000318"/>
    <property type="project" value="GO_Central"/>
</dbReference>
<dbReference type="GO" id="GO:0005829">
    <property type="term" value="C:cytosol"/>
    <property type="evidence" value="ECO:0000314"/>
    <property type="project" value="FlyBase"/>
</dbReference>
<dbReference type="GO" id="GO:0016020">
    <property type="term" value="C:membrane"/>
    <property type="evidence" value="ECO:0000314"/>
    <property type="project" value="FlyBase"/>
</dbReference>
<dbReference type="GO" id="GO:0005886">
    <property type="term" value="C:plasma membrane"/>
    <property type="evidence" value="ECO:0007669"/>
    <property type="project" value="UniProtKB-SubCell"/>
</dbReference>
<dbReference type="GO" id="GO:0004177">
    <property type="term" value="F:aminopeptidase activity"/>
    <property type="evidence" value="ECO:0007669"/>
    <property type="project" value="UniProtKB-KW"/>
</dbReference>
<dbReference type="GO" id="GO:0008239">
    <property type="term" value="F:dipeptidyl-peptidase activity"/>
    <property type="evidence" value="ECO:0000314"/>
    <property type="project" value="FlyBase"/>
</dbReference>
<dbReference type="GO" id="GO:0046872">
    <property type="term" value="F:metal ion binding"/>
    <property type="evidence" value="ECO:0007669"/>
    <property type="project" value="UniProtKB-KW"/>
</dbReference>
<dbReference type="GO" id="GO:0008235">
    <property type="term" value="F:metalloexopeptidase activity"/>
    <property type="evidence" value="ECO:0007669"/>
    <property type="project" value="InterPro"/>
</dbReference>
<dbReference type="GO" id="GO:0006508">
    <property type="term" value="P:proteolysis"/>
    <property type="evidence" value="ECO:0000314"/>
    <property type="project" value="FlyBase"/>
</dbReference>
<dbReference type="FunFam" id="3.30.540.30:FF:000001">
    <property type="entry name" value="Dipeptidyl peptidase 3"/>
    <property type="match status" value="1"/>
</dbReference>
<dbReference type="FunFam" id="3.30.540.30:FF:000002">
    <property type="entry name" value="Dipeptidyl peptidase 3"/>
    <property type="match status" value="1"/>
</dbReference>
<dbReference type="FunFam" id="3.30.540.30:FF:000008">
    <property type="entry name" value="Dipeptidyl peptidase 3"/>
    <property type="match status" value="1"/>
</dbReference>
<dbReference type="Gene3D" id="3.30.540.30">
    <property type="match status" value="3"/>
</dbReference>
<dbReference type="InterPro" id="IPR005317">
    <property type="entry name" value="Dipeptidyl-peptase3"/>
</dbReference>
<dbReference type="InterPro" id="IPR039461">
    <property type="entry name" value="Peptidase_M49"/>
</dbReference>
<dbReference type="PANTHER" id="PTHR23422:SF11">
    <property type="entry name" value="DIPEPTIDYL PEPTIDASE 3"/>
    <property type="match status" value="1"/>
</dbReference>
<dbReference type="PANTHER" id="PTHR23422">
    <property type="entry name" value="DIPEPTIDYL PEPTIDASE III-RELATED"/>
    <property type="match status" value="1"/>
</dbReference>
<dbReference type="Pfam" id="PF03571">
    <property type="entry name" value="Peptidase_M49"/>
    <property type="match status" value="1"/>
</dbReference>
<dbReference type="PIRSF" id="PIRSF007828">
    <property type="entry name" value="Dipeptidyl-peptidase_III"/>
    <property type="match status" value="1"/>
</dbReference>
<gene>
    <name type="primary">DppIII</name>
    <name type="ORF">CG7415</name>
</gene>
<proteinExistence type="evidence at transcript level"/>
<protein>
    <recommendedName>
        <fullName>Dipeptidyl peptidase 3</fullName>
        <ecNumber>3.4.14.4</ecNumber>
    </recommendedName>
    <alternativeName>
        <fullName>Dipeptidyl aminopeptidase III</fullName>
        <shortName>Dipeptidyl arylamidase III</shortName>
    </alternativeName>
    <alternativeName>
        <fullName>Dipeptidyl peptidase III</fullName>
        <shortName>DPP III</shortName>
    </alternativeName>
</protein>
<comment type="function">
    <text evidence="4">Degrades neuropeptide proctolin (RYLPT) by cleavage between Tyr and Leu residues.</text>
</comment>
<comment type="catalytic activity">
    <reaction evidence="4">
        <text>Release of an N-terminal dipeptide from a peptide comprising four or more residues, with broad specificity. Also acts on dipeptidyl 2-naphthylamides.</text>
        <dbReference type="EC" id="3.4.14.4"/>
    </reaction>
</comment>
<comment type="cofactor">
    <cofactor evidence="2">
        <name>Zn(2+)</name>
        <dbReference type="ChEBI" id="CHEBI:29105"/>
    </cofactor>
    <text evidence="2">Binds 1 zinc ion per subunit.</text>
</comment>
<comment type="subcellular location">
    <molecule>Isoform 1</molecule>
    <subcellularLocation>
        <location evidence="3">Membrane</location>
        <topology evidence="3">Multi-pass membrane protein</topology>
    </subcellularLocation>
</comment>
<comment type="subcellular location">
    <molecule>Isoform 2</molecule>
    <subcellularLocation>
        <location evidence="4">Cell membrane</location>
        <topology evidence="3">Multi-pass membrane protein</topology>
    </subcellularLocation>
    <subcellularLocation>
        <location evidence="4">Cytoplasm</location>
    </subcellularLocation>
</comment>
<comment type="alternative products">
    <event type="alternative splicing"/>
    <isoform>
        <id>Q9VHR8-1</id>
        <name>1</name>
        <name>A</name>
        <sequence type="displayed"/>
    </isoform>
    <isoform>
        <id>Q9VHR8-2</id>
        <name>2</name>
        <name>B</name>
        <sequence type="described" ref="VSP_007939"/>
    </isoform>
</comment>
<comment type="similarity">
    <text evidence="6">Belongs to the peptidase M49 family.</text>
</comment>
<comment type="sequence caution" evidence="6">
    <conflict type="erroneous initiation">
        <sequence resource="EMBL-CDS" id="AAK93049"/>
    </conflict>
</comment>
<feature type="chain" id="PRO_0000078242" description="Dipeptidyl peptidase 3">
    <location>
        <begin position="1"/>
        <end position="786"/>
    </location>
</feature>
<feature type="topological domain" description="Cytoplasmic" evidence="3">
    <location>
        <begin position="1"/>
        <end position="108"/>
    </location>
</feature>
<feature type="transmembrane region" description="Helical" evidence="3">
    <location>
        <begin position="109"/>
        <end position="129"/>
    </location>
</feature>
<feature type="topological domain" description="Extracellular" evidence="3">
    <location>
        <begin position="130"/>
        <end position="594"/>
    </location>
</feature>
<feature type="transmembrane region" description="Helical" evidence="3">
    <location>
        <begin position="595"/>
        <end position="615"/>
    </location>
</feature>
<feature type="topological domain" description="Cytoplasmic" evidence="3">
    <location>
        <begin position="616"/>
        <end position="786"/>
    </location>
</feature>
<feature type="active site" evidence="1">
    <location>
        <position position="507"/>
    </location>
</feature>
<feature type="binding site" evidence="2">
    <location>
        <position position="506"/>
    </location>
    <ligand>
        <name>Zn(2+)</name>
        <dbReference type="ChEBI" id="CHEBI:29105"/>
        <note>catalytic</note>
    </ligand>
</feature>
<feature type="binding site" evidence="2">
    <location>
        <position position="511"/>
    </location>
    <ligand>
        <name>Zn(2+)</name>
        <dbReference type="ChEBI" id="CHEBI:29105"/>
        <note>catalytic</note>
    </ligand>
</feature>
<feature type="binding site" evidence="2">
    <location>
        <position position="564"/>
    </location>
    <ligand>
        <name>Zn(2+)</name>
        <dbReference type="ChEBI" id="CHEBI:29105"/>
        <note>catalytic</note>
    </ligand>
</feature>
<feature type="splice variant" id="VSP_007939" description="In isoform 2." evidence="5">
    <location>
        <begin position="1"/>
        <end position="63"/>
    </location>
</feature>
<reference key="1">
    <citation type="journal article" date="2000" name="Science">
        <title>The genome sequence of Drosophila melanogaster.</title>
        <authorList>
            <person name="Adams M.D."/>
            <person name="Celniker S.E."/>
            <person name="Holt R.A."/>
            <person name="Evans C.A."/>
            <person name="Gocayne J.D."/>
            <person name="Amanatides P.G."/>
            <person name="Scherer S.E."/>
            <person name="Li P.W."/>
            <person name="Hoskins R.A."/>
            <person name="Galle R.F."/>
            <person name="George R.A."/>
            <person name="Lewis S.E."/>
            <person name="Richards S."/>
            <person name="Ashburner M."/>
            <person name="Henderson S.N."/>
            <person name="Sutton G.G."/>
            <person name="Wortman J.R."/>
            <person name="Yandell M.D."/>
            <person name="Zhang Q."/>
            <person name="Chen L.X."/>
            <person name="Brandon R.C."/>
            <person name="Rogers Y.-H.C."/>
            <person name="Blazej R.G."/>
            <person name="Champe M."/>
            <person name="Pfeiffer B.D."/>
            <person name="Wan K.H."/>
            <person name="Doyle C."/>
            <person name="Baxter E.G."/>
            <person name="Helt G."/>
            <person name="Nelson C.R."/>
            <person name="Miklos G.L.G."/>
            <person name="Abril J.F."/>
            <person name="Agbayani A."/>
            <person name="An H.-J."/>
            <person name="Andrews-Pfannkoch C."/>
            <person name="Baldwin D."/>
            <person name="Ballew R.M."/>
            <person name="Basu A."/>
            <person name="Baxendale J."/>
            <person name="Bayraktaroglu L."/>
            <person name="Beasley E.M."/>
            <person name="Beeson K.Y."/>
            <person name="Benos P.V."/>
            <person name="Berman B.P."/>
            <person name="Bhandari D."/>
            <person name="Bolshakov S."/>
            <person name="Borkova D."/>
            <person name="Botchan M.R."/>
            <person name="Bouck J."/>
            <person name="Brokstein P."/>
            <person name="Brottier P."/>
            <person name="Burtis K.C."/>
            <person name="Busam D.A."/>
            <person name="Butler H."/>
            <person name="Cadieu E."/>
            <person name="Center A."/>
            <person name="Chandra I."/>
            <person name="Cherry J.M."/>
            <person name="Cawley S."/>
            <person name="Dahlke C."/>
            <person name="Davenport L.B."/>
            <person name="Davies P."/>
            <person name="de Pablos B."/>
            <person name="Delcher A."/>
            <person name="Deng Z."/>
            <person name="Mays A.D."/>
            <person name="Dew I."/>
            <person name="Dietz S.M."/>
            <person name="Dodson K."/>
            <person name="Doup L.E."/>
            <person name="Downes M."/>
            <person name="Dugan-Rocha S."/>
            <person name="Dunkov B.C."/>
            <person name="Dunn P."/>
            <person name="Durbin K.J."/>
            <person name="Evangelista C.C."/>
            <person name="Ferraz C."/>
            <person name="Ferriera S."/>
            <person name="Fleischmann W."/>
            <person name="Fosler C."/>
            <person name="Gabrielian A.E."/>
            <person name="Garg N.S."/>
            <person name="Gelbart W.M."/>
            <person name="Glasser K."/>
            <person name="Glodek A."/>
            <person name="Gong F."/>
            <person name="Gorrell J.H."/>
            <person name="Gu Z."/>
            <person name="Guan P."/>
            <person name="Harris M."/>
            <person name="Harris N.L."/>
            <person name="Harvey D.A."/>
            <person name="Heiman T.J."/>
            <person name="Hernandez J.R."/>
            <person name="Houck J."/>
            <person name="Hostin D."/>
            <person name="Houston K.A."/>
            <person name="Howland T.J."/>
            <person name="Wei M.-H."/>
            <person name="Ibegwam C."/>
            <person name="Jalali M."/>
            <person name="Kalush F."/>
            <person name="Karpen G.H."/>
            <person name="Ke Z."/>
            <person name="Kennison J.A."/>
            <person name="Ketchum K.A."/>
            <person name="Kimmel B.E."/>
            <person name="Kodira C.D."/>
            <person name="Kraft C.L."/>
            <person name="Kravitz S."/>
            <person name="Kulp D."/>
            <person name="Lai Z."/>
            <person name="Lasko P."/>
            <person name="Lei Y."/>
            <person name="Levitsky A.A."/>
            <person name="Li J.H."/>
            <person name="Li Z."/>
            <person name="Liang Y."/>
            <person name="Lin X."/>
            <person name="Liu X."/>
            <person name="Mattei B."/>
            <person name="McIntosh T.C."/>
            <person name="McLeod M.P."/>
            <person name="McPherson D."/>
            <person name="Merkulov G."/>
            <person name="Milshina N.V."/>
            <person name="Mobarry C."/>
            <person name="Morris J."/>
            <person name="Moshrefi A."/>
            <person name="Mount S.M."/>
            <person name="Moy M."/>
            <person name="Murphy B."/>
            <person name="Murphy L."/>
            <person name="Muzny D.M."/>
            <person name="Nelson D.L."/>
            <person name="Nelson D.R."/>
            <person name="Nelson K.A."/>
            <person name="Nixon K."/>
            <person name="Nusskern D.R."/>
            <person name="Pacleb J.M."/>
            <person name="Palazzolo M."/>
            <person name="Pittman G.S."/>
            <person name="Pan S."/>
            <person name="Pollard J."/>
            <person name="Puri V."/>
            <person name="Reese M.G."/>
            <person name="Reinert K."/>
            <person name="Remington K."/>
            <person name="Saunders R.D.C."/>
            <person name="Scheeler F."/>
            <person name="Shen H."/>
            <person name="Shue B.C."/>
            <person name="Siden-Kiamos I."/>
            <person name="Simpson M."/>
            <person name="Skupski M.P."/>
            <person name="Smith T.J."/>
            <person name="Spier E."/>
            <person name="Spradling A.C."/>
            <person name="Stapleton M."/>
            <person name="Strong R."/>
            <person name="Sun E."/>
            <person name="Svirskas R."/>
            <person name="Tector C."/>
            <person name="Turner R."/>
            <person name="Venter E."/>
            <person name="Wang A.H."/>
            <person name="Wang X."/>
            <person name="Wang Z.-Y."/>
            <person name="Wassarman D.A."/>
            <person name="Weinstock G.M."/>
            <person name="Weissenbach J."/>
            <person name="Williams S.M."/>
            <person name="Woodage T."/>
            <person name="Worley K.C."/>
            <person name="Wu D."/>
            <person name="Yang S."/>
            <person name="Yao Q.A."/>
            <person name="Ye J."/>
            <person name="Yeh R.-F."/>
            <person name="Zaveri J.S."/>
            <person name="Zhan M."/>
            <person name="Zhang G."/>
            <person name="Zhao Q."/>
            <person name="Zheng L."/>
            <person name="Zheng X.H."/>
            <person name="Zhong F.N."/>
            <person name="Zhong W."/>
            <person name="Zhou X."/>
            <person name="Zhu S.C."/>
            <person name="Zhu X."/>
            <person name="Smith H.O."/>
            <person name="Gibbs R.A."/>
            <person name="Myers E.W."/>
            <person name="Rubin G.M."/>
            <person name="Venter J.C."/>
        </authorList>
    </citation>
    <scope>NUCLEOTIDE SEQUENCE [LARGE SCALE GENOMIC DNA]</scope>
    <source>
        <strain>Berkeley</strain>
    </source>
</reference>
<reference key="2">
    <citation type="journal article" date="2002" name="Genome Biol.">
        <title>Annotation of the Drosophila melanogaster euchromatic genome: a systematic review.</title>
        <authorList>
            <person name="Misra S."/>
            <person name="Crosby M.A."/>
            <person name="Mungall C.J."/>
            <person name="Matthews B.B."/>
            <person name="Campbell K.S."/>
            <person name="Hradecky P."/>
            <person name="Huang Y."/>
            <person name="Kaminker J.S."/>
            <person name="Millburn G.H."/>
            <person name="Prochnik S.E."/>
            <person name="Smith C.D."/>
            <person name="Tupy J.L."/>
            <person name="Whitfield E.J."/>
            <person name="Bayraktaroglu L."/>
            <person name="Berman B.P."/>
            <person name="Bettencourt B.R."/>
            <person name="Celniker S.E."/>
            <person name="de Grey A.D.N.J."/>
            <person name="Drysdale R.A."/>
            <person name="Harris N.L."/>
            <person name="Richter J."/>
            <person name="Russo S."/>
            <person name="Schroeder A.J."/>
            <person name="Shu S.Q."/>
            <person name="Stapleton M."/>
            <person name="Yamada C."/>
            <person name="Ashburner M."/>
            <person name="Gelbart W.M."/>
            <person name="Rubin G.M."/>
            <person name="Lewis S.E."/>
        </authorList>
    </citation>
    <scope>GENOME REANNOTATION</scope>
    <scope>ALTERNATIVE SPLICING</scope>
    <source>
        <strain>Berkeley</strain>
    </source>
</reference>
<reference key="3">
    <citation type="journal article" date="2002" name="Genome Biol.">
        <title>A Drosophila full-length cDNA resource.</title>
        <authorList>
            <person name="Stapleton M."/>
            <person name="Carlson J.W."/>
            <person name="Brokstein P."/>
            <person name="Yu C."/>
            <person name="Champe M."/>
            <person name="George R.A."/>
            <person name="Guarin H."/>
            <person name="Kronmiller B."/>
            <person name="Pacleb J.M."/>
            <person name="Park S."/>
            <person name="Wan K.H."/>
            <person name="Rubin G.M."/>
            <person name="Celniker S.E."/>
        </authorList>
    </citation>
    <scope>NUCLEOTIDE SEQUENCE [LARGE SCALE MRNA] (ISOFORMS 1 AND 2)</scope>
    <source>
        <strain>Berkeley</strain>
        <tissue>Embryo</tissue>
        <tissue>Head</tissue>
        <tissue>Testis</tissue>
    </source>
</reference>
<reference key="4">
    <citation type="journal article" date="2001" name="Eur. J. Biochem.">
        <title>Purification, partial sequencing and characterization of an insect membrane dipeptidyl aminopeptidase that degrades the insect neuropeptide proctolin.</title>
        <authorList>
            <person name="Mazzocco C."/>
            <person name="Fukasawa K.M."/>
            <person name="Raymond A.-A."/>
            <person name="Puiroux J."/>
        </authorList>
    </citation>
    <scope>IDENTIFICATION (ISOFORM 2)</scope>
</reference>
<reference key="5">
    <citation type="journal article" date="2003" name="Eur. J. Biochem.">
        <title>Characterization of a functionally expressed dipeptidyl aminopeptidase III from Drosophila melanogaster.</title>
        <authorList>
            <person name="Mazzocco C."/>
            <person name="Fukasawa K.M."/>
            <person name="Auguste P."/>
            <person name="Puiroux J."/>
        </authorList>
    </citation>
    <scope>FUNCTION</scope>
    <scope>ENZYME ACTIVITY</scope>
    <scope>SUBCELLULAR LOCATION (ISOFORM 2)</scope>
</reference>